<organism>
    <name type="scientific">Oryza sativa subsp. japonica</name>
    <name type="common">Rice</name>
    <dbReference type="NCBI Taxonomy" id="39947"/>
    <lineage>
        <taxon>Eukaryota</taxon>
        <taxon>Viridiplantae</taxon>
        <taxon>Streptophyta</taxon>
        <taxon>Embryophyta</taxon>
        <taxon>Tracheophyta</taxon>
        <taxon>Spermatophyta</taxon>
        <taxon>Magnoliopsida</taxon>
        <taxon>Liliopsida</taxon>
        <taxon>Poales</taxon>
        <taxon>Poaceae</taxon>
        <taxon>BOP clade</taxon>
        <taxon>Oryzoideae</taxon>
        <taxon>Oryzeae</taxon>
        <taxon>Oryzinae</taxon>
        <taxon>Oryza</taxon>
        <taxon>Oryza sativa</taxon>
    </lineage>
</organism>
<accession>Q5VNN5</accession>
<accession>A0A0P0V5R4</accession>
<accession>A2ZVU5</accession>
<accession>B9EY95</accession>
<gene>
    <name type="primary">PDF1B</name>
    <name type="ordered locus">Os01g0637600</name>
    <name type="ordered locus">LOC_Os01g45070</name>
    <name type="ORF">OsJ_002667</name>
    <name type="ORF">OsJ_02762</name>
    <name type="ORF">P0004A09.6</name>
    <name type="ORF">P0696E01.27</name>
</gene>
<comment type="function">
    <text>Removes the formyl group from the N-terminal Met of newly synthesized proteins.</text>
</comment>
<comment type="catalytic activity">
    <reaction>
        <text>N-terminal N-formyl-L-methionyl-[peptide] + H2O = N-terminal L-methionyl-[peptide] + formate</text>
        <dbReference type="Rhea" id="RHEA:24420"/>
        <dbReference type="Rhea" id="RHEA-COMP:10639"/>
        <dbReference type="Rhea" id="RHEA-COMP:10640"/>
        <dbReference type="ChEBI" id="CHEBI:15377"/>
        <dbReference type="ChEBI" id="CHEBI:15740"/>
        <dbReference type="ChEBI" id="CHEBI:49298"/>
        <dbReference type="ChEBI" id="CHEBI:64731"/>
        <dbReference type="EC" id="3.5.1.88"/>
    </reaction>
</comment>
<comment type="cofactor">
    <cofactor evidence="1">
        <name>Fe(2+)</name>
        <dbReference type="ChEBI" id="CHEBI:29033"/>
    </cofactor>
    <text evidence="1">Binds 1 Fe(2+) ion.</text>
</comment>
<comment type="activity regulation">
    <text>Inhibited by actinonin.</text>
</comment>
<comment type="subunit">
    <text evidence="1">Homodimer.</text>
</comment>
<comment type="subcellular location">
    <subcellularLocation>
        <location evidence="3">Plastid</location>
        <location evidence="3">Chloroplast stroma</location>
    </subcellularLocation>
    <subcellularLocation>
        <location evidence="3">Mitochondrion</location>
    </subcellularLocation>
</comment>
<comment type="tissue specificity">
    <text evidence="3">Mainly expressed in mature leaves and sheaths.</text>
</comment>
<comment type="disruption phenotype">
    <text evidence="3">Chlorina and retarded growth.</text>
</comment>
<comment type="similarity">
    <text evidence="4">Belongs to the polypeptide deformylase family.</text>
</comment>
<comment type="sequence caution" evidence="4">
    <conflict type="erroneous gene model prediction">
        <sequence resource="EMBL-CDS" id="EEE55058"/>
    </conflict>
</comment>
<dbReference type="EC" id="3.5.1.88"/>
<dbReference type="EMBL" id="EU213046">
    <property type="protein sequence ID" value="ABY64740.1"/>
    <property type="molecule type" value="mRNA"/>
</dbReference>
<dbReference type="EMBL" id="AP003607">
    <property type="protein sequence ID" value="BAD68576.1"/>
    <property type="molecule type" value="Genomic_DNA"/>
</dbReference>
<dbReference type="EMBL" id="AP004367">
    <property type="protein sequence ID" value="BAD68940.1"/>
    <property type="molecule type" value="Genomic_DNA"/>
</dbReference>
<dbReference type="EMBL" id="AP008207">
    <property type="protein sequence ID" value="BAF05583.1"/>
    <property type="molecule type" value="Genomic_DNA"/>
</dbReference>
<dbReference type="EMBL" id="AP014957">
    <property type="protein sequence ID" value="BAS73349.1"/>
    <property type="molecule type" value="Genomic_DNA"/>
</dbReference>
<dbReference type="EMBL" id="CM000138">
    <property type="protein sequence ID" value="EEE55058.1"/>
    <property type="status" value="ALT_SEQ"/>
    <property type="molecule type" value="Genomic_DNA"/>
</dbReference>
<dbReference type="EMBL" id="AK106980">
    <property type="protein sequence ID" value="BAG97903.1"/>
    <property type="molecule type" value="mRNA"/>
</dbReference>
<dbReference type="RefSeq" id="XP_015612309.1">
    <property type="nucleotide sequence ID" value="XM_015756823.1"/>
</dbReference>
<dbReference type="SMR" id="Q5VNN5"/>
<dbReference type="FunCoup" id="Q5VNN5">
    <property type="interactions" value="555"/>
</dbReference>
<dbReference type="STRING" id="39947.Q5VNN5"/>
<dbReference type="PaxDb" id="39947-Q5VNN5"/>
<dbReference type="EnsemblPlants" id="Os01t0637600-01">
    <property type="protein sequence ID" value="Os01t0637600-01"/>
    <property type="gene ID" value="Os01g0637600"/>
</dbReference>
<dbReference type="Gramene" id="Os01t0637600-01">
    <property type="protein sequence ID" value="Os01t0637600-01"/>
    <property type="gene ID" value="Os01g0637600"/>
</dbReference>
<dbReference type="KEGG" id="dosa:Os01g0637600"/>
<dbReference type="eggNOG" id="KOG3137">
    <property type="taxonomic scope" value="Eukaryota"/>
</dbReference>
<dbReference type="HOGENOM" id="CLU_061901_0_0_1"/>
<dbReference type="InParanoid" id="Q5VNN5"/>
<dbReference type="OMA" id="CAAWLQP"/>
<dbReference type="OrthoDB" id="276063at2759"/>
<dbReference type="BRENDA" id="3.5.1.88">
    <property type="organism ID" value="4460"/>
</dbReference>
<dbReference type="Proteomes" id="UP000000763">
    <property type="component" value="Chromosome 1"/>
</dbReference>
<dbReference type="Proteomes" id="UP000007752">
    <property type="component" value="Chromosome 1"/>
</dbReference>
<dbReference type="Proteomes" id="UP000059680">
    <property type="component" value="Chromosome 1"/>
</dbReference>
<dbReference type="GO" id="GO:0009570">
    <property type="term" value="C:chloroplast stroma"/>
    <property type="evidence" value="ECO:0007669"/>
    <property type="project" value="UniProtKB-SubCell"/>
</dbReference>
<dbReference type="GO" id="GO:0005739">
    <property type="term" value="C:mitochondrion"/>
    <property type="evidence" value="ECO:0007669"/>
    <property type="project" value="UniProtKB-SubCell"/>
</dbReference>
<dbReference type="GO" id="GO:0046872">
    <property type="term" value="F:metal ion binding"/>
    <property type="evidence" value="ECO:0007669"/>
    <property type="project" value="UniProtKB-KW"/>
</dbReference>
<dbReference type="GO" id="GO:0042586">
    <property type="term" value="F:peptide deformylase activity"/>
    <property type="evidence" value="ECO:0007669"/>
    <property type="project" value="UniProtKB-EC"/>
</dbReference>
<dbReference type="GO" id="GO:0006412">
    <property type="term" value="P:translation"/>
    <property type="evidence" value="ECO:0007669"/>
    <property type="project" value="UniProtKB-KW"/>
</dbReference>
<dbReference type="CDD" id="cd00487">
    <property type="entry name" value="Pep_deformylase"/>
    <property type="match status" value="1"/>
</dbReference>
<dbReference type="FunFam" id="3.90.45.10:FF:000006">
    <property type="entry name" value="Peptide deformylase"/>
    <property type="match status" value="1"/>
</dbReference>
<dbReference type="Gene3D" id="3.90.45.10">
    <property type="entry name" value="Peptide deformylase"/>
    <property type="match status" value="1"/>
</dbReference>
<dbReference type="HAMAP" id="MF_00163">
    <property type="entry name" value="Pep_deformylase"/>
    <property type="match status" value="1"/>
</dbReference>
<dbReference type="InterPro" id="IPR023635">
    <property type="entry name" value="Peptide_deformylase"/>
</dbReference>
<dbReference type="InterPro" id="IPR036821">
    <property type="entry name" value="Peptide_deformylase_sf"/>
</dbReference>
<dbReference type="NCBIfam" id="TIGR00079">
    <property type="entry name" value="pept_deformyl"/>
    <property type="match status" value="1"/>
</dbReference>
<dbReference type="NCBIfam" id="NF001159">
    <property type="entry name" value="PRK00150.1-3"/>
    <property type="match status" value="1"/>
</dbReference>
<dbReference type="PANTHER" id="PTHR10458">
    <property type="entry name" value="PEPTIDE DEFORMYLASE"/>
    <property type="match status" value="1"/>
</dbReference>
<dbReference type="PANTHER" id="PTHR10458:SF22">
    <property type="entry name" value="PEPTIDE DEFORMYLASE"/>
    <property type="match status" value="1"/>
</dbReference>
<dbReference type="Pfam" id="PF01327">
    <property type="entry name" value="Pep_deformylase"/>
    <property type="match status" value="1"/>
</dbReference>
<dbReference type="PRINTS" id="PR01576">
    <property type="entry name" value="PDEFORMYLASE"/>
</dbReference>
<dbReference type="SUPFAM" id="SSF56420">
    <property type="entry name" value="Peptide deformylase"/>
    <property type="match status" value="1"/>
</dbReference>
<proteinExistence type="evidence at transcript level"/>
<evidence type="ECO:0000250" key="1"/>
<evidence type="ECO:0000255" key="2"/>
<evidence type="ECO:0000269" key="3">
    <source>
    </source>
</evidence>
<evidence type="ECO:0000305" key="4"/>
<keyword id="KW-0150">Chloroplast</keyword>
<keyword id="KW-0378">Hydrolase</keyword>
<keyword id="KW-0408">Iron</keyword>
<keyword id="KW-0479">Metal-binding</keyword>
<keyword id="KW-0496">Mitochondrion</keyword>
<keyword id="KW-0934">Plastid</keyword>
<keyword id="KW-0648">Protein biosynthesis</keyword>
<keyword id="KW-1185">Reference proteome</keyword>
<keyword id="KW-0809">Transit peptide</keyword>
<protein>
    <recommendedName>
        <fullName>Peptide deformylase 1B, chloroplastic</fullName>
        <shortName>OsPDF1B</shortName>
        <shortName>PDF 1B</shortName>
        <ecNumber>3.5.1.88</ecNumber>
    </recommendedName>
</protein>
<name>DEF1B_ORYSJ</name>
<feature type="transit peptide" description="Chloroplast" evidence="2">
    <location>
        <begin position="1"/>
        <end position="51"/>
    </location>
</feature>
<feature type="chain" id="PRO_0000369421" description="Peptide deformylase 1B, chloroplastic">
    <location>
        <begin position="52"/>
        <end position="269"/>
    </location>
</feature>
<feature type="active site" evidence="1">
    <location>
        <position position="211"/>
    </location>
</feature>
<feature type="binding site" evidence="1">
    <location>
        <position position="168"/>
    </location>
    <ligand>
        <name>Fe cation</name>
        <dbReference type="ChEBI" id="CHEBI:24875"/>
    </ligand>
</feature>
<feature type="binding site" evidence="1">
    <location>
        <position position="210"/>
    </location>
    <ligand>
        <name>Fe cation</name>
        <dbReference type="ChEBI" id="CHEBI:24875"/>
    </ligand>
</feature>
<feature type="binding site" evidence="1">
    <location>
        <position position="214"/>
    </location>
    <ligand>
        <name>Fe cation</name>
        <dbReference type="ChEBI" id="CHEBI:24875"/>
    </ligand>
</feature>
<reference key="1">
    <citation type="journal article" date="2008" name="Plant Cell Physiol.">
        <title>Rice peptide deformylase PDF1B is crucial for development of chloroplasts.</title>
        <authorList>
            <person name="Moon S."/>
            <person name="Giglione C."/>
            <person name="Lee D.-Y."/>
            <person name="An S."/>
            <person name="Jeong D.-H."/>
            <person name="Meinnel T."/>
            <person name="An G."/>
        </authorList>
    </citation>
    <scope>NUCLEOTIDE SEQUENCE [MRNA]</scope>
    <scope>TISSUE SPECIFICITY</scope>
    <scope>SUBCELLULAR LOCATION</scope>
    <scope>DISRUPTION PHENOTYPE</scope>
    <source>
        <strain>cv. Dongjin</strain>
    </source>
</reference>
<reference key="2">
    <citation type="journal article" date="2002" name="Nature">
        <title>The genome sequence and structure of rice chromosome 1.</title>
        <authorList>
            <person name="Sasaki T."/>
            <person name="Matsumoto T."/>
            <person name="Yamamoto K."/>
            <person name="Sakata K."/>
            <person name="Baba T."/>
            <person name="Katayose Y."/>
            <person name="Wu J."/>
            <person name="Niimura Y."/>
            <person name="Cheng Z."/>
            <person name="Nagamura Y."/>
            <person name="Antonio B.A."/>
            <person name="Kanamori H."/>
            <person name="Hosokawa S."/>
            <person name="Masukawa M."/>
            <person name="Arikawa K."/>
            <person name="Chiden Y."/>
            <person name="Hayashi M."/>
            <person name="Okamoto M."/>
            <person name="Ando T."/>
            <person name="Aoki H."/>
            <person name="Arita K."/>
            <person name="Hamada M."/>
            <person name="Harada C."/>
            <person name="Hijishita S."/>
            <person name="Honda M."/>
            <person name="Ichikawa Y."/>
            <person name="Idonuma A."/>
            <person name="Iijima M."/>
            <person name="Ikeda M."/>
            <person name="Ikeno M."/>
            <person name="Ito S."/>
            <person name="Ito T."/>
            <person name="Ito Y."/>
            <person name="Ito Y."/>
            <person name="Iwabuchi A."/>
            <person name="Kamiya K."/>
            <person name="Karasawa W."/>
            <person name="Katagiri S."/>
            <person name="Kikuta A."/>
            <person name="Kobayashi N."/>
            <person name="Kono I."/>
            <person name="Machita K."/>
            <person name="Maehara T."/>
            <person name="Mizuno H."/>
            <person name="Mizubayashi T."/>
            <person name="Mukai Y."/>
            <person name="Nagasaki H."/>
            <person name="Nakashima M."/>
            <person name="Nakama Y."/>
            <person name="Nakamichi Y."/>
            <person name="Nakamura M."/>
            <person name="Namiki N."/>
            <person name="Negishi M."/>
            <person name="Ohta I."/>
            <person name="Ono N."/>
            <person name="Saji S."/>
            <person name="Sakai K."/>
            <person name="Shibata M."/>
            <person name="Shimokawa T."/>
            <person name="Shomura A."/>
            <person name="Song J."/>
            <person name="Takazaki Y."/>
            <person name="Terasawa K."/>
            <person name="Tsuji K."/>
            <person name="Waki K."/>
            <person name="Yamagata H."/>
            <person name="Yamane H."/>
            <person name="Yoshiki S."/>
            <person name="Yoshihara R."/>
            <person name="Yukawa K."/>
            <person name="Zhong H."/>
            <person name="Iwama H."/>
            <person name="Endo T."/>
            <person name="Ito H."/>
            <person name="Hahn J.H."/>
            <person name="Kim H.-I."/>
            <person name="Eun M.-Y."/>
            <person name="Yano M."/>
            <person name="Jiang J."/>
            <person name="Gojobori T."/>
        </authorList>
    </citation>
    <scope>NUCLEOTIDE SEQUENCE [LARGE SCALE GENOMIC DNA]</scope>
    <source>
        <strain>cv. Nipponbare</strain>
    </source>
</reference>
<reference key="3">
    <citation type="journal article" date="2005" name="Nature">
        <title>The map-based sequence of the rice genome.</title>
        <authorList>
            <consortium name="International rice genome sequencing project (IRGSP)"/>
        </authorList>
    </citation>
    <scope>NUCLEOTIDE SEQUENCE [LARGE SCALE GENOMIC DNA]</scope>
    <source>
        <strain>cv. Nipponbare</strain>
    </source>
</reference>
<reference key="4">
    <citation type="journal article" date="2008" name="Nucleic Acids Res.">
        <title>The rice annotation project database (RAP-DB): 2008 update.</title>
        <authorList>
            <consortium name="The rice annotation project (RAP)"/>
        </authorList>
    </citation>
    <scope>GENOME REANNOTATION</scope>
    <source>
        <strain>cv. Nipponbare</strain>
    </source>
</reference>
<reference key="5">
    <citation type="journal article" date="2013" name="Rice">
        <title>Improvement of the Oryza sativa Nipponbare reference genome using next generation sequence and optical map data.</title>
        <authorList>
            <person name="Kawahara Y."/>
            <person name="de la Bastide M."/>
            <person name="Hamilton J.P."/>
            <person name="Kanamori H."/>
            <person name="McCombie W.R."/>
            <person name="Ouyang S."/>
            <person name="Schwartz D.C."/>
            <person name="Tanaka T."/>
            <person name="Wu J."/>
            <person name="Zhou S."/>
            <person name="Childs K.L."/>
            <person name="Davidson R.M."/>
            <person name="Lin H."/>
            <person name="Quesada-Ocampo L."/>
            <person name="Vaillancourt B."/>
            <person name="Sakai H."/>
            <person name="Lee S.S."/>
            <person name="Kim J."/>
            <person name="Numa H."/>
            <person name="Itoh T."/>
            <person name="Buell C.R."/>
            <person name="Matsumoto T."/>
        </authorList>
    </citation>
    <scope>GENOME REANNOTATION</scope>
    <source>
        <strain>cv. Nipponbare</strain>
    </source>
</reference>
<reference key="6">
    <citation type="journal article" date="2005" name="PLoS Biol.">
        <title>The genomes of Oryza sativa: a history of duplications.</title>
        <authorList>
            <person name="Yu J."/>
            <person name="Wang J."/>
            <person name="Lin W."/>
            <person name="Li S."/>
            <person name="Li H."/>
            <person name="Zhou J."/>
            <person name="Ni P."/>
            <person name="Dong W."/>
            <person name="Hu S."/>
            <person name="Zeng C."/>
            <person name="Zhang J."/>
            <person name="Zhang Y."/>
            <person name="Li R."/>
            <person name="Xu Z."/>
            <person name="Li S."/>
            <person name="Li X."/>
            <person name="Zheng H."/>
            <person name="Cong L."/>
            <person name="Lin L."/>
            <person name="Yin J."/>
            <person name="Geng J."/>
            <person name="Li G."/>
            <person name="Shi J."/>
            <person name="Liu J."/>
            <person name="Lv H."/>
            <person name="Li J."/>
            <person name="Wang J."/>
            <person name="Deng Y."/>
            <person name="Ran L."/>
            <person name="Shi X."/>
            <person name="Wang X."/>
            <person name="Wu Q."/>
            <person name="Li C."/>
            <person name="Ren X."/>
            <person name="Wang J."/>
            <person name="Wang X."/>
            <person name="Li D."/>
            <person name="Liu D."/>
            <person name="Zhang X."/>
            <person name="Ji Z."/>
            <person name="Zhao W."/>
            <person name="Sun Y."/>
            <person name="Zhang Z."/>
            <person name="Bao J."/>
            <person name="Han Y."/>
            <person name="Dong L."/>
            <person name="Ji J."/>
            <person name="Chen P."/>
            <person name="Wu S."/>
            <person name="Liu J."/>
            <person name="Xiao Y."/>
            <person name="Bu D."/>
            <person name="Tan J."/>
            <person name="Yang L."/>
            <person name="Ye C."/>
            <person name="Zhang J."/>
            <person name="Xu J."/>
            <person name="Zhou Y."/>
            <person name="Yu Y."/>
            <person name="Zhang B."/>
            <person name="Zhuang S."/>
            <person name="Wei H."/>
            <person name="Liu B."/>
            <person name="Lei M."/>
            <person name="Yu H."/>
            <person name="Li Y."/>
            <person name="Xu H."/>
            <person name="Wei S."/>
            <person name="He X."/>
            <person name="Fang L."/>
            <person name="Zhang Z."/>
            <person name="Zhang Y."/>
            <person name="Huang X."/>
            <person name="Su Z."/>
            <person name="Tong W."/>
            <person name="Li J."/>
            <person name="Tong Z."/>
            <person name="Li S."/>
            <person name="Ye J."/>
            <person name="Wang L."/>
            <person name="Fang L."/>
            <person name="Lei T."/>
            <person name="Chen C.-S."/>
            <person name="Chen H.-C."/>
            <person name="Xu Z."/>
            <person name="Li H."/>
            <person name="Huang H."/>
            <person name="Zhang F."/>
            <person name="Xu H."/>
            <person name="Li N."/>
            <person name="Zhao C."/>
            <person name="Li S."/>
            <person name="Dong L."/>
            <person name="Huang Y."/>
            <person name="Li L."/>
            <person name="Xi Y."/>
            <person name="Qi Q."/>
            <person name="Li W."/>
            <person name="Zhang B."/>
            <person name="Hu W."/>
            <person name="Zhang Y."/>
            <person name="Tian X."/>
            <person name="Jiao Y."/>
            <person name="Liang X."/>
            <person name="Jin J."/>
            <person name="Gao L."/>
            <person name="Zheng W."/>
            <person name="Hao B."/>
            <person name="Liu S.-M."/>
            <person name="Wang W."/>
            <person name="Yuan L."/>
            <person name="Cao M."/>
            <person name="McDermott J."/>
            <person name="Samudrala R."/>
            <person name="Wang J."/>
            <person name="Wong G.K.-S."/>
            <person name="Yang H."/>
        </authorList>
    </citation>
    <scope>NUCLEOTIDE SEQUENCE [LARGE SCALE GENOMIC DNA]</scope>
    <source>
        <strain>cv. Nipponbare</strain>
    </source>
</reference>
<reference key="7">
    <citation type="journal article" date="2003" name="Science">
        <title>Collection, mapping, and annotation of over 28,000 cDNA clones from japonica rice.</title>
        <authorList>
            <consortium name="The rice full-length cDNA consortium"/>
        </authorList>
    </citation>
    <scope>NUCLEOTIDE SEQUENCE [LARGE SCALE MRNA]</scope>
    <source>
        <strain>cv. Nipponbare</strain>
    </source>
</reference>
<sequence>MAARLHLRLGPRLRGFASSFAPLLAAHPRALPLSRMGSVAPLAAARARRGFGSAVATAPPAEDEDFATAADLQFEPPLKVVKYPDPILRARNKRINTFDDNLRSLTDEMFDVMYKTDGIGLSAPQVGVNVQLMVFNPAGVKGEGEEIVLVNPVVYKMSKRLLVYEEGCLSFPGIYANVVRPDNVKIDAQDVTGAKIKVKLSGLSARVFQHEFDHLQGILFFDRMSLDVLESVREGLKDLEKKYEESTGLVSPESIENYKGRKDLISFSR</sequence>